<comment type="function">
    <text>Part of the Sec61 complex, which is the major component of a channel-forming translocon complex that mediates protein translocation across the endoplasmic reticulum (ER). The functional states of the translocon complex include co- and post-translational ER import, cotranslational membrane protein integration and retrograde transport of misfolded proteins out of the ER. In the cotranslational pathway, ribosomes synthesizing presecretory proteins are targeted to the translocon by the cytosolic signal recognition particle (SRP) and its ER-localized receptor. The association of the Sec61 complex with the ribosome is mediated by the 28S rRNA of the large ribosomal subunit. SRP-independent post-translational translocation requires the association of additional factors, such as the Sec62/63 complex and KAR2.</text>
</comment>
<comment type="subunit">
    <text evidence="3">Component of the heterotrimeric Sec61 complex, which is composed of SSH1, SBH1 and SSS1. Presumably three to four Sec61 heterotrimers assemble into an oligomeric ring with a central aqueous pore. In cotranslational ER import, the pore diameter varies from 9-15 A in a ribosome-free resting state to 40-60 A in a functional state when associated with the ribosome. The Sec61 complex is part of a channel-forming translocon complex whose composition seem to change dependent upon different functional states. During post-translational ER import the Sec61 complex associates with the Sec62/63 complex to form the Sec complex. SBH1 interacts OST2, OST4 and WBP1 components of the OT complex.</text>
</comment>
<comment type="interaction">
    <interactant intactId="EBI-16410">
        <id>P52870</id>
    </interactant>
    <interactant intactId="EBI-12673">
        <id>P46964</id>
        <label>OST2</label>
    </interactant>
    <organismsDiffer>false</organismsDiffer>
    <experiments>2</experiments>
</comment>
<comment type="interaction">
    <interactant intactId="EBI-16410">
        <id>P52870</id>
    </interactant>
    <interactant intactId="EBI-12689">
        <id>Q99380</id>
        <label>OST4</label>
    </interactant>
    <organismsDiffer>false</organismsDiffer>
    <experiments>2</experiments>
</comment>
<comment type="interaction">
    <interactant intactId="EBI-16410">
        <id>P52870</id>
    </interactant>
    <interactant intactId="EBI-12658">
        <id>P33767</id>
        <label>WBP1</label>
    </interactant>
    <organismsDiffer>false</organismsDiffer>
    <experiments>2</experiments>
</comment>
<comment type="subcellular location">
    <subcellularLocation>
        <location>Endoplasmic reticulum membrane</location>
        <topology>Single-pass membrane protein</topology>
    </subcellularLocation>
</comment>
<comment type="similarity">
    <text evidence="4">Belongs to the SEC61-beta family.</text>
</comment>
<sequence length="82" mass="8711">MSSPTPPGGQRTLQKRKQGSSQKVAASAPKKNTNSNNSILKIYSDEATGLRVDPLVVLFLAVGFIFSVVALHVISKVAGKLF</sequence>
<organism>
    <name type="scientific">Saccharomyces cerevisiae (strain ATCC 204508 / S288c)</name>
    <name type="common">Baker's yeast</name>
    <dbReference type="NCBI Taxonomy" id="559292"/>
    <lineage>
        <taxon>Eukaryota</taxon>
        <taxon>Fungi</taxon>
        <taxon>Dikarya</taxon>
        <taxon>Ascomycota</taxon>
        <taxon>Saccharomycotina</taxon>
        <taxon>Saccharomycetes</taxon>
        <taxon>Saccharomycetales</taxon>
        <taxon>Saccharomycetaceae</taxon>
        <taxon>Saccharomyces</taxon>
    </lineage>
</organism>
<accession>P52870</accession>
<accession>D3DLZ4</accession>
<protein>
    <recommendedName>
        <fullName>Protein transport protein SBH1</fullName>
    </recommendedName>
    <alternativeName>
        <fullName>Sec61 complex subunit SBH1</fullName>
    </alternativeName>
    <alternativeName>
        <fullName>Sec61 complex subunit beta</fullName>
    </alternativeName>
</protein>
<evidence type="ECO:0000255" key="1"/>
<evidence type="ECO:0000256" key="2">
    <source>
        <dbReference type="SAM" id="MobiDB-lite"/>
    </source>
</evidence>
<evidence type="ECO:0000269" key="3">
    <source>
    </source>
</evidence>
<evidence type="ECO:0000305" key="4"/>
<evidence type="ECO:0007829" key="5">
    <source>
        <dbReference type="PDB" id="7KAH"/>
    </source>
</evidence>
<reference key="1">
    <citation type="journal article" date="1996" name="Yeast">
        <title>Yeast protein translocation complex: isolation of two genes SEB1 and SEB2 encoding proteins homologous to the Sec61 beta subunit.</title>
        <authorList>
            <person name="Toikkanen J."/>
            <person name="Gatti E."/>
            <person name="Takei K."/>
            <person name="Saloheimo M."/>
            <person name="Olkkonen V.M."/>
            <person name="Soederlund H."/>
            <person name="de Camilli P."/>
            <person name="Keraenen S."/>
        </authorList>
    </citation>
    <scope>NUCLEOTIDE SEQUENCE [MRNA]</scope>
</reference>
<reference key="2">
    <citation type="journal article" date="1997" name="Nature">
        <title>The nucleotide sequence of Saccharomyces cerevisiae chromosome V.</title>
        <authorList>
            <person name="Dietrich F.S."/>
            <person name="Mulligan J.T."/>
            <person name="Hennessy K.M."/>
            <person name="Yelton M.A."/>
            <person name="Allen E."/>
            <person name="Araujo R."/>
            <person name="Aviles E."/>
            <person name="Berno A."/>
            <person name="Brennan T."/>
            <person name="Carpenter J."/>
            <person name="Chen E."/>
            <person name="Cherry J.M."/>
            <person name="Chung E."/>
            <person name="Duncan M."/>
            <person name="Guzman E."/>
            <person name="Hartzell G."/>
            <person name="Hunicke-Smith S."/>
            <person name="Hyman R.W."/>
            <person name="Kayser A."/>
            <person name="Komp C."/>
            <person name="Lashkari D."/>
            <person name="Lew H."/>
            <person name="Lin D."/>
            <person name="Mosedale D."/>
            <person name="Nakahara K."/>
            <person name="Namath A."/>
            <person name="Norgren R."/>
            <person name="Oefner P."/>
            <person name="Oh C."/>
            <person name="Petel F.X."/>
            <person name="Roberts D."/>
            <person name="Sehl P."/>
            <person name="Schramm S."/>
            <person name="Shogren T."/>
            <person name="Smith V."/>
            <person name="Taylor P."/>
            <person name="Wei Y."/>
            <person name="Botstein D."/>
            <person name="Davis R.W."/>
        </authorList>
    </citation>
    <scope>NUCLEOTIDE SEQUENCE [LARGE SCALE GENOMIC DNA]</scope>
    <source>
        <strain>ATCC 204508 / S288c</strain>
    </source>
</reference>
<reference key="3">
    <citation type="journal article" date="2014" name="G3 (Bethesda)">
        <title>The reference genome sequence of Saccharomyces cerevisiae: Then and now.</title>
        <authorList>
            <person name="Engel S.R."/>
            <person name="Dietrich F.S."/>
            <person name="Fisk D.G."/>
            <person name="Binkley G."/>
            <person name="Balakrishnan R."/>
            <person name="Costanzo M.C."/>
            <person name="Dwight S.S."/>
            <person name="Hitz B.C."/>
            <person name="Karra K."/>
            <person name="Nash R.S."/>
            <person name="Weng S."/>
            <person name="Wong E.D."/>
            <person name="Lloyd P."/>
            <person name="Skrzypek M.S."/>
            <person name="Miyasato S.R."/>
            <person name="Simison M."/>
            <person name="Cherry J.M."/>
        </authorList>
    </citation>
    <scope>GENOME REANNOTATION</scope>
    <source>
        <strain>ATCC 204508 / S288c</strain>
    </source>
</reference>
<reference key="4">
    <citation type="journal article" date="2012" name="Proc. Natl. Acad. Sci. U.S.A.">
        <title>N-terminal acetylome analyses and functional insights of the N-terminal acetyltransferase NatB.</title>
        <authorList>
            <person name="Van Damme P."/>
            <person name="Lasa M."/>
            <person name="Polevoda B."/>
            <person name="Gazquez C."/>
            <person name="Elosegui-Artola A."/>
            <person name="Kim D.S."/>
            <person name="De Juan-Pardo E."/>
            <person name="Demeyer K."/>
            <person name="Hole K."/>
            <person name="Larrea E."/>
            <person name="Timmerman E."/>
            <person name="Prieto J."/>
            <person name="Arnesen T."/>
            <person name="Sherman F."/>
            <person name="Gevaert K."/>
            <person name="Aldabe R."/>
        </authorList>
    </citation>
    <scope>IDENTIFICATION BY MASS SPECTROMETRY [LARGE SCALE ANALYSIS]</scope>
</reference>
<reference key="5">
    <citation type="journal article" date="1996" name="Cell">
        <title>Oligomeric rings of the Sec61p complex induced by ligands required for protein translocation.</title>
        <authorList>
            <person name="Hanein D."/>
            <person name="Matlack K.E."/>
            <person name="Jungnickel B."/>
            <person name="Plath K."/>
            <person name="Kalies K.-U."/>
            <person name="Miller K.R."/>
            <person name="Rapoport T.A."/>
            <person name="Akey C.W."/>
        </authorList>
    </citation>
    <scope>ELECTRON MICROSCOPY OF THE SEC61 COMPLEX</scope>
</reference>
<reference key="6">
    <citation type="journal article" date="1997" name="Cell">
        <title>The aqueous pore through the translocon has a diameter of 40-60 A during cotranslational protein translocation at the ER membrane.</title>
        <authorList>
            <person name="Hamman B.D."/>
            <person name="Chen J.C."/>
            <person name="Johnson E.E."/>
            <person name="Johnson A.E."/>
        </authorList>
    </citation>
    <scope>TRANSLOCON COMPLEX PORE</scope>
</reference>
<reference key="7">
    <citation type="journal article" date="1999" name="Annu. Rev. Cell Dev. Biol.">
        <title>The translocon: a dynamic gateway at the ER membrane.</title>
        <authorList>
            <person name="Johnson A.E."/>
            <person name="van Waes M.A."/>
        </authorList>
    </citation>
    <scope>REVIEW ON THE TRANSLOCON COMPLEX</scope>
</reference>
<reference key="8">
    <citation type="journal article" date="2000" name="EMBO J.">
        <title>Evolutionarily conserved binding of ribosomes to the translocation channel via the large ribosomal RNA.</title>
        <authorList>
            <person name="Prinz A."/>
            <person name="Behrens C."/>
            <person name="Rapoport T.A."/>
            <person name="Hartmann E."/>
            <person name="Kalies K.-U."/>
        </authorList>
    </citation>
    <scope>ASSOCIATION OF THE SEC61 COMPLEX WITH RIBOSOMES</scope>
</reference>
<reference key="9">
    <citation type="journal article" date="2005" name="J. Biol. Chem.">
        <title>Subunits of the translocon interact with components of the oligosaccharyl transferase complex.</title>
        <authorList>
            <person name="Chavan M."/>
            <person name="Yan A."/>
            <person name="Lennarz W.J."/>
        </authorList>
    </citation>
    <scope>INTERACTION WITH OST2; OST4 AND WBP1</scope>
</reference>
<feature type="chain" id="PRO_0000157261" description="Protein transport protein SBH1">
    <location>
        <begin position="1"/>
        <end position="82"/>
    </location>
</feature>
<feature type="topological domain" description="Cytoplasmic" evidence="1">
    <location>
        <begin position="1"/>
        <end position="53"/>
    </location>
</feature>
<feature type="transmembrane region" description="Helical" evidence="1">
    <location>
        <begin position="54"/>
        <end position="74"/>
    </location>
</feature>
<feature type="region of interest" description="Disordered" evidence="2">
    <location>
        <begin position="1"/>
        <end position="36"/>
    </location>
</feature>
<feature type="compositionally biased region" description="Polar residues" evidence="2">
    <location>
        <begin position="19"/>
        <end position="36"/>
    </location>
</feature>
<feature type="helix" evidence="5">
    <location>
        <begin position="54"/>
        <end position="81"/>
    </location>
</feature>
<proteinExistence type="evidence at protein level"/>
<keyword id="KW-0002">3D-structure</keyword>
<keyword id="KW-0256">Endoplasmic reticulum</keyword>
<keyword id="KW-0472">Membrane</keyword>
<keyword id="KW-0653">Protein transport</keyword>
<keyword id="KW-1185">Reference proteome</keyword>
<keyword id="KW-0811">Translocation</keyword>
<keyword id="KW-0812">Transmembrane</keyword>
<keyword id="KW-1133">Transmembrane helix</keyword>
<keyword id="KW-0813">Transport</keyword>
<dbReference type="EMBL" id="Z47789">
    <property type="protein sequence ID" value="CAA87710.1"/>
    <property type="molecule type" value="mRNA"/>
</dbReference>
<dbReference type="EMBL" id="U18839">
    <property type="protein sequence ID" value="AAB64663.1"/>
    <property type="molecule type" value="Genomic_DNA"/>
</dbReference>
<dbReference type="EMBL" id="BK006939">
    <property type="protein sequence ID" value="DAA07748.1"/>
    <property type="molecule type" value="Genomic_DNA"/>
</dbReference>
<dbReference type="PIR" id="S68162">
    <property type="entry name" value="S68162"/>
</dbReference>
<dbReference type="RefSeq" id="NP_011011.3">
    <property type="nucleotide sequence ID" value="NM_001180032.3"/>
</dbReference>
<dbReference type="PDB" id="6N3Q">
    <property type="method" value="EM"/>
    <property type="resolution" value="3.68 A"/>
    <property type="chains" value="B=1-82"/>
</dbReference>
<dbReference type="PDB" id="6ND1">
    <property type="method" value="EM"/>
    <property type="resolution" value="4.10 A"/>
    <property type="chains" value="D=1-82"/>
</dbReference>
<dbReference type="PDB" id="7AFT">
    <property type="method" value="EM"/>
    <property type="resolution" value="4.40 A"/>
    <property type="chains" value="B=1-82"/>
</dbReference>
<dbReference type="PDB" id="7KAH">
    <property type="method" value="EM"/>
    <property type="resolution" value="3.10 A"/>
    <property type="chains" value="B=1-82"/>
</dbReference>
<dbReference type="PDB" id="7KAI">
    <property type="method" value="EM"/>
    <property type="resolution" value="3.20 A"/>
    <property type="chains" value="B=1-82"/>
</dbReference>
<dbReference type="PDB" id="7KAJ">
    <property type="method" value="EM"/>
    <property type="resolution" value="3.10 A"/>
    <property type="chains" value="B=1-82"/>
</dbReference>
<dbReference type="PDB" id="7KAO">
    <property type="method" value="EM"/>
    <property type="resolution" value="4.00 A"/>
    <property type="chains" value="B=1-82"/>
</dbReference>
<dbReference type="PDB" id="7KAP">
    <property type="method" value="EM"/>
    <property type="resolution" value="4.10 A"/>
    <property type="chains" value="B=1-82"/>
</dbReference>
<dbReference type="PDB" id="7KAQ">
    <property type="method" value="EM"/>
    <property type="resolution" value="4.00 A"/>
    <property type="chains" value="B=1-82"/>
</dbReference>
<dbReference type="PDB" id="7KAR">
    <property type="method" value="EM"/>
    <property type="resolution" value="4.00 A"/>
    <property type="chains" value="B=1-82"/>
</dbReference>
<dbReference type="PDB" id="7KAS">
    <property type="method" value="EM"/>
    <property type="resolution" value="3.90 A"/>
    <property type="chains" value="B=1-82"/>
</dbReference>
<dbReference type="PDB" id="7KAT">
    <property type="method" value="EM"/>
    <property type="resolution" value="4.40 A"/>
    <property type="chains" value="B=1-82"/>
</dbReference>
<dbReference type="PDB" id="7KAU">
    <property type="method" value="EM"/>
    <property type="resolution" value="4.00 A"/>
    <property type="chains" value="B=1-82"/>
</dbReference>
<dbReference type="PDB" id="7KB5">
    <property type="method" value="EM"/>
    <property type="resolution" value="3.80 A"/>
    <property type="chains" value="B=1-82"/>
</dbReference>
<dbReference type="PDBsum" id="6N3Q"/>
<dbReference type="PDBsum" id="6ND1"/>
<dbReference type="PDBsum" id="7AFT"/>
<dbReference type="PDBsum" id="7KAH"/>
<dbReference type="PDBsum" id="7KAI"/>
<dbReference type="PDBsum" id="7KAJ"/>
<dbReference type="PDBsum" id="7KAO"/>
<dbReference type="PDBsum" id="7KAP"/>
<dbReference type="PDBsum" id="7KAQ"/>
<dbReference type="PDBsum" id="7KAR"/>
<dbReference type="PDBsum" id="7KAS"/>
<dbReference type="PDBsum" id="7KAT"/>
<dbReference type="PDBsum" id="7KAU"/>
<dbReference type="PDBsum" id="7KB5"/>
<dbReference type="EMDB" id="EMD-0336"/>
<dbReference type="EMDB" id="EMD-0440"/>
<dbReference type="EMDB" id="EMD-11774"/>
<dbReference type="EMDB" id="EMD-22770"/>
<dbReference type="EMDB" id="EMD-22771"/>
<dbReference type="EMDB" id="EMD-22772"/>
<dbReference type="EMDB" id="EMD-22778"/>
<dbReference type="EMDB" id="EMD-22779"/>
<dbReference type="EMDB" id="EMD-22780"/>
<dbReference type="EMDB" id="EMD-22781"/>
<dbReference type="EMDB" id="EMD-22782"/>
<dbReference type="EMDB" id="EMD-22783"/>
<dbReference type="EMDB" id="EMD-22784"/>
<dbReference type="EMDB" id="EMD-22787"/>
<dbReference type="SMR" id="P52870"/>
<dbReference type="BioGRID" id="36832">
    <property type="interactions" value="172"/>
</dbReference>
<dbReference type="ComplexPortal" id="CPX-1833">
    <property type="entry name" value="SEC61 protein-conducting channel complex"/>
</dbReference>
<dbReference type="ComplexPortal" id="CPX-3055">
    <property type="entry name" value="Translocon complex"/>
</dbReference>
<dbReference type="DIP" id="DIP-5681N"/>
<dbReference type="FunCoup" id="P52870">
    <property type="interactions" value="216"/>
</dbReference>
<dbReference type="IntAct" id="P52870">
    <property type="interactions" value="19"/>
</dbReference>
<dbReference type="MINT" id="P52870"/>
<dbReference type="STRING" id="4932.YER087C-B"/>
<dbReference type="TCDB" id="3.A.5.8.1">
    <property type="family name" value="the general secretory pathway (sec) family"/>
</dbReference>
<dbReference type="GlyGen" id="P52870">
    <property type="glycosylation" value="1 site"/>
</dbReference>
<dbReference type="iPTMnet" id="P52870"/>
<dbReference type="PaxDb" id="4932-YER087C-B"/>
<dbReference type="PeptideAtlas" id="P52870"/>
<dbReference type="TopDownProteomics" id="P52870"/>
<dbReference type="EnsemblFungi" id="YER087C-B_mRNA">
    <property type="protein sequence ID" value="YER087C-B"/>
    <property type="gene ID" value="YER087C-B"/>
</dbReference>
<dbReference type="GeneID" id="856821"/>
<dbReference type="KEGG" id="sce:YER087C-B"/>
<dbReference type="AGR" id="SGD:S000002128"/>
<dbReference type="SGD" id="S000002128">
    <property type="gene designation" value="SBH1"/>
</dbReference>
<dbReference type="VEuPathDB" id="FungiDB:YER087C-B"/>
<dbReference type="eggNOG" id="KOG3457">
    <property type="taxonomic scope" value="Eukaryota"/>
</dbReference>
<dbReference type="GeneTree" id="ENSGT00940000176828"/>
<dbReference type="HOGENOM" id="CLU_133423_1_1_1"/>
<dbReference type="InParanoid" id="P52870"/>
<dbReference type="OMA" id="NTEDNKG"/>
<dbReference type="OrthoDB" id="5401193at2759"/>
<dbReference type="BioCyc" id="YEAST:G3O-30349-MONOMER"/>
<dbReference type="BioGRID-ORCS" id="856821">
    <property type="hits" value="3 hits in 10 CRISPR screens"/>
</dbReference>
<dbReference type="PRO" id="PR:P52870"/>
<dbReference type="Proteomes" id="UP000002311">
    <property type="component" value="Chromosome V"/>
</dbReference>
<dbReference type="RNAct" id="P52870">
    <property type="molecule type" value="protein"/>
</dbReference>
<dbReference type="GO" id="GO:0005829">
    <property type="term" value="C:cytosol"/>
    <property type="evidence" value="ECO:0000304"/>
    <property type="project" value="Reactome"/>
</dbReference>
<dbReference type="GO" id="GO:0005783">
    <property type="term" value="C:endoplasmic reticulum"/>
    <property type="evidence" value="ECO:0000314"/>
    <property type="project" value="SGD"/>
</dbReference>
<dbReference type="GO" id="GO:0005789">
    <property type="term" value="C:endoplasmic reticulum membrane"/>
    <property type="evidence" value="ECO:0000314"/>
    <property type="project" value="SGD"/>
</dbReference>
<dbReference type="GO" id="GO:0016020">
    <property type="term" value="C:membrane"/>
    <property type="evidence" value="ECO:0000318"/>
    <property type="project" value="GO_Central"/>
</dbReference>
<dbReference type="GO" id="GO:0030867">
    <property type="term" value="C:rough endoplasmic reticulum membrane"/>
    <property type="evidence" value="ECO:0000303"/>
    <property type="project" value="ComplexPortal"/>
</dbReference>
<dbReference type="GO" id="GO:0005784">
    <property type="term" value="C:Sec61 translocon complex"/>
    <property type="evidence" value="ECO:0000314"/>
    <property type="project" value="SGD"/>
</dbReference>
<dbReference type="GO" id="GO:0071256">
    <property type="term" value="C:translocon complex"/>
    <property type="evidence" value="ECO:0000353"/>
    <property type="project" value="ComplexPortal"/>
</dbReference>
<dbReference type="GO" id="GO:0005085">
    <property type="term" value="F:guanyl-nucleotide exchange factor activity"/>
    <property type="evidence" value="ECO:0000314"/>
    <property type="project" value="SGD"/>
</dbReference>
<dbReference type="GO" id="GO:0008320">
    <property type="term" value="F:protein transmembrane transporter activity"/>
    <property type="evidence" value="ECO:0000314"/>
    <property type="project" value="SGD"/>
</dbReference>
<dbReference type="GO" id="GO:0031204">
    <property type="term" value="P:post-translational protein targeting to membrane, translocation"/>
    <property type="evidence" value="ECO:0000314"/>
    <property type="project" value="SGD"/>
</dbReference>
<dbReference type="GO" id="GO:0006616">
    <property type="term" value="P:SRP-dependent cotranslational protein targeting to membrane, translocation"/>
    <property type="evidence" value="ECO:0000315"/>
    <property type="project" value="SGD"/>
</dbReference>
<dbReference type="InterPro" id="IPR030671">
    <property type="entry name" value="Sec61-beta/Sbh"/>
</dbReference>
<dbReference type="InterPro" id="IPR016482">
    <property type="entry name" value="SecG/Sec61-beta/Sbh"/>
</dbReference>
<dbReference type="PANTHER" id="PTHR13509">
    <property type="entry name" value="SEC61 SUBUNIT BETA"/>
    <property type="match status" value="1"/>
</dbReference>
<dbReference type="Pfam" id="PF03911">
    <property type="entry name" value="Sec61_beta"/>
    <property type="match status" value="1"/>
</dbReference>
<dbReference type="PIRSF" id="PIRSF006398">
    <property type="entry name" value="Sec61_beta_euk"/>
    <property type="match status" value="1"/>
</dbReference>
<gene>
    <name type="primary">SBH1</name>
    <name type="synonym">SEB1</name>
    <name type="ordered locus">YER087C-B</name>
    <name type="ORF">YER087BC</name>
</gene>
<name>SC6B1_YEAST</name>